<sequence>MKIAILSRDGTLYSCKRLREAAIQRGHLVEILDPLSCYMNINPAASSIHYKGRKLPHFDAVIPRIGTAITFYGTAALRQFEMLGSYPLNESVAIARARDKLRSMQLLARQGIDLPVTGIAHSPDDTSDLIDMVGGAPLVVKLVEGTQGIGVVLAETRQAAESVIDAFRGLNAHILVQEYIKEAQGCDIRCLVVGDEVVAAIERRAKEGDFRSNLHRGGAASVASITPQEREIAIKAARTMALDVAGVDILRANRGPLVMEVNASPGLEGIEKTTGIDIAGKMIRWIERHATTEYCLKTGG</sequence>
<feature type="chain" id="PRO_1000146932" description="Ribosomal protein bS6--L-glutamate ligase">
    <location>
        <begin position="1"/>
        <end position="300"/>
    </location>
</feature>
<feature type="domain" description="ATP-grasp" evidence="1">
    <location>
        <begin position="104"/>
        <end position="287"/>
    </location>
</feature>
<feature type="binding site" evidence="1">
    <location>
        <position position="141"/>
    </location>
    <ligand>
        <name>ATP</name>
        <dbReference type="ChEBI" id="CHEBI:30616"/>
    </ligand>
</feature>
<feature type="binding site" evidence="1">
    <location>
        <begin position="178"/>
        <end position="179"/>
    </location>
    <ligand>
        <name>ATP</name>
        <dbReference type="ChEBI" id="CHEBI:30616"/>
    </ligand>
</feature>
<feature type="binding site" evidence="1">
    <location>
        <position position="187"/>
    </location>
    <ligand>
        <name>ATP</name>
        <dbReference type="ChEBI" id="CHEBI:30616"/>
    </ligand>
</feature>
<feature type="binding site" evidence="1">
    <location>
        <begin position="211"/>
        <end position="213"/>
    </location>
    <ligand>
        <name>ATP</name>
        <dbReference type="ChEBI" id="CHEBI:30616"/>
    </ligand>
</feature>
<feature type="binding site" evidence="1">
    <location>
        <position position="248"/>
    </location>
    <ligand>
        <name>Mg(2+)</name>
        <dbReference type="ChEBI" id="CHEBI:18420"/>
        <label>1</label>
    </ligand>
</feature>
<feature type="binding site" evidence="1">
    <location>
        <position position="248"/>
    </location>
    <ligand>
        <name>Mn(2+)</name>
        <dbReference type="ChEBI" id="CHEBI:29035"/>
        <label>1</label>
    </ligand>
</feature>
<feature type="binding site" evidence="1">
    <location>
        <position position="260"/>
    </location>
    <ligand>
        <name>Mg(2+)</name>
        <dbReference type="ChEBI" id="CHEBI:18420"/>
        <label>1</label>
    </ligand>
</feature>
<feature type="binding site" evidence="1">
    <location>
        <position position="260"/>
    </location>
    <ligand>
        <name>Mg(2+)</name>
        <dbReference type="ChEBI" id="CHEBI:18420"/>
        <label>2</label>
    </ligand>
</feature>
<feature type="binding site" evidence="1">
    <location>
        <position position="260"/>
    </location>
    <ligand>
        <name>Mn(2+)</name>
        <dbReference type="ChEBI" id="CHEBI:29035"/>
        <label>1</label>
    </ligand>
</feature>
<feature type="binding site" evidence="1">
    <location>
        <position position="260"/>
    </location>
    <ligand>
        <name>Mn(2+)</name>
        <dbReference type="ChEBI" id="CHEBI:29035"/>
        <label>2</label>
    </ligand>
</feature>
<feature type="binding site" evidence="1">
    <location>
        <position position="262"/>
    </location>
    <ligand>
        <name>Mg(2+)</name>
        <dbReference type="ChEBI" id="CHEBI:18420"/>
        <label>2</label>
    </ligand>
</feature>
<feature type="binding site" evidence="1">
    <location>
        <position position="262"/>
    </location>
    <ligand>
        <name>Mn(2+)</name>
        <dbReference type="ChEBI" id="CHEBI:29035"/>
        <label>2</label>
    </ligand>
</feature>
<reference key="1">
    <citation type="journal article" date="2009" name="PLoS Genet.">
        <title>Organised genome dynamics in the Escherichia coli species results in highly diverse adaptive paths.</title>
        <authorList>
            <person name="Touchon M."/>
            <person name="Hoede C."/>
            <person name="Tenaillon O."/>
            <person name="Barbe V."/>
            <person name="Baeriswyl S."/>
            <person name="Bidet P."/>
            <person name="Bingen E."/>
            <person name="Bonacorsi S."/>
            <person name="Bouchier C."/>
            <person name="Bouvet O."/>
            <person name="Calteau A."/>
            <person name="Chiapello H."/>
            <person name="Clermont O."/>
            <person name="Cruveiller S."/>
            <person name="Danchin A."/>
            <person name="Diard M."/>
            <person name="Dossat C."/>
            <person name="Karoui M.E."/>
            <person name="Frapy E."/>
            <person name="Garry L."/>
            <person name="Ghigo J.M."/>
            <person name="Gilles A.M."/>
            <person name="Johnson J."/>
            <person name="Le Bouguenec C."/>
            <person name="Lescat M."/>
            <person name="Mangenot S."/>
            <person name="Martinez-Jehanne V."/>
            <person name="Matic I."/>
            <person name="Nassif X."/>
            <person name="Oztas S."/>
            <person name="Petit M.A."/>
            <person name="Pichon C."/>
            <person name="Rouy Z."/>
            <person name="Ruf C.S."/>
            <person name="Schneider D."/>
            <person name="Tourret J."/>
            <person name="Vacherie B."/>
            <person name="Vallenet D."/>
            <person name="Medigue C."/>
            <person name="Rocha E.P.C."/>
            <person name="Denamur E."/>
        </authorList>
    </citation>
    <scope>NUCLEOTIDE SEQUENCE [LARGE SCALE GENOMIC DNA]</scope>
    <source>
        <strain>IAI1</strain>
    </source>
</reference>
<accession>B7M7C7</accession>
<protein>
    <recommendedName>
        <fullName evidence="1">Ribosomal protein bS6--L-glutamate ligase</fullName>
        <ecNumber evidence="1">6.3.2.-</ecNumber>
    </recommendedName>
    <alternativeName>
        <fullName evidence="1">Poly-alpha-glutamate synthase</fullName>
    </alternativeName>
    <alternativeName>
        <fullName evidence="1">Ribosomal protein bS6 modification protein</fullName>
    </alternativeName>
</protein>
<evidence type="ECO:0000255" key="1">
    <source>
        <dbReference type="HAMAP-Rule" id="MF_01552"/>
    </source>
</evidence>
<proteinExistence type="inferred from homology"/>
<name>RIMK_ECO8A</name>
<comment type="function">
    <text evidence="1">An L-glutamate ligase that catalyzes the ATP-dependent post-translational addition of glutamate residues to the C-terminus of ribosomal protein bS6 (RpsF). Is also able to catalyze the synthesis of poly-alpha-glutamate in vitro, via ATP hydrolysis from unprotected glutamate as substrate. The number of glutamate residues added to either RpsF or to poly-alpha-glutamate changes with pH.</text>
</comment>
<comment type="cofactor">
    <cofactor evidence="1">
        <name>Mg(2+)</name>
        <dbReference type="ChEBI" id="CHEBI:18420"/>
    </cofactor>
    <cofactor evidence="1">
        <name>Mn(2+)</name>
        <dbReference type="ChEBI" id="CHEBI:29035"/>
    </cofactor>
    <text evidence="1">Binds 2 magnesium or manganese ions per subunit.</text>
</comment>
<comment type="similarity">
    <text evidence="1">Belongs to the RimK family.</text>
</comment>
<organism>
    <name type="scientific">Escherichia coli O8 (strain IAI1)</name>
    <dbReference type="NCBI Taxonomy" id="585034"/>
    <lineage>
        <taxon>Bacteria</taxon>
        <taxon>Pseudomonadati</taxon>
        <taxon>Pseudomonadota</taxon>
        <taxon>Gammaproteobacteria</taxon>
        <taxon>Enterobacterales</taxon>
        <taxon>Enterobacteriaceae</taxon>
        <taxon>Escherichia</taxon>
    </lineage>
</organism>
<gene>
    <name evidence="1" type="primary">rimK</name>
    <name type="ordered locus">ECIAI1_0891</name>
</gene>
<dbReference type="EC" id="6.3.2.-" evidence="1"/>
<dbReference type="EMBL" id="CU928160">
    <property type="protein sequence ID" value="CAQ97756.1"/>
    <property type="molecule type" value="Genomic_DNA"/>
</dbReference>
<dbReference type="RefSeq" id="WP_000684321.1">
    <property type="nucleotide sequence ID" value="NC_011741.1"/>
</dbReference>
<dbReference type="SMR" id="B7M7C7"/>
<dbReference type="GeneID" id="93776570"/>
<dbReference type="KEGG" id="ecr:ECIAI1_0891"/>
<dbReference type="HOGENOM" id="CLU_054353_0_1_6"/>
<dbReference type="GO" id="GO:0005737">
    <property type="term" value="C:cytoplasm"/>
    <property type="evidence" value="ECO:0007669"/>
    <property type="project" value="TreeGrafter"/>
</dbReference>
<dbReference type="GO" id="GO:0005524">
    <property type="term" value="F:ATP binding"/>
    <property type="evidence" value="ECO:0007669"/>
    <property type="project" value="UniProtKB-UniRule"/>
</dbReference>
<dbReference type="GO" id="GO:0046872">
    <property type="term" value="F:metal ion binding"/>
    <property type="evidence" value="ECO:0007669"/>
    <property type="project" value="UniProtKB-KW"/>
</dbReference>
<dbReference type="GO" id="GO:0018169">
    <property type="term" value="F:ribosomal S6-glutamic acid ligase activity"/>
    <property type="evidence" value="ECO:0007669"/>
    <property type="project" value="UniProtKB-UniRule"/>
</dbReference>
<dbReference type="GO" id="GO:0036211">
    <property type="term" value="P:protein modification process"/>
    <property type="evidence" value="ECO:0007669"/>
    <property type="project" value="InterPro"/>
</dbReference>
<dbReference type="GO" id="GO:0009432">
    <property type="term" value="P:SOS response"/>
    <property type="evidence" value="ECO:0007669"/>
    <property type="project" value="TreeGrafter"/>
</dbReference>
<dbReference type="GO" id="GO:0006412">
    <property type="term" value="P:translation"/>
    <property type="evidence" value="ECO:0007669"/>
    <property type="project" value="UniProtKB-KW"/>
</dbReference>
<dbReference type="FunFam" id="3.40.50.20:FF:000004">
    <property type="entry name" value="Probable alpha-L-glutamate ligase"/>
    <property type="match status" value="1"/>
</dbReference>
<dbReference type="FunFam" id="3.30.1490.20:FF:000005">
    <property type="entry name" value="Probable alpha-L-glutamate ligase 1"/>
    <property type="match status" value="1"/>
</dbReference>
<dbReference type="FunFam" id="3.30.470.20:FF:000016">
    <property type="entry name" value="Ribosomal protein S6--L-glutamate ligase"/>
    <property type="match status" value="1"/>
</dbReference>
<dbReference type="Gene3D" id="3.40.50.20">
    <property type="match status" value="1"/>
</dbReference>
<dbReference type="Gene3D" id="3.30.1490.20">
    <property type="entry name" value="ATP-grasp fold, A domain"/>
    <property type="match status" value="1"/>
</dbReference>
<dbReference type="Gene3D" id="3.30.470.20">
    <property type="entry name" value="ATP-grasp fold, B domain"/>
    <property type="match status" value="1"/>
</dbReference>
<dbReference type="HAMAP" id="MF_01552">
    <property type="entry name" value="RimK"/>
    <property type="match status" value="1"/>
</dbReference>
<dbReference type="InterPro" id="IPR011761">
    <property type="entry name" value="ATP-grasp"/>
</dbReference>
<dbReference type="InterPro" id="IPR013651">
    <property type="entry name" value="ATP-grasp_RimK-type"/>
</dbReference>
<dbReference type="InterPro" id="IPR013815">
    <property type="entry name" value="ATP_grasp_subdomain_1"/>
</dbReference>
<dbReference type="InterPro" id="IPR023533">
    <property type="entry name" value="RimK"/>
</dbReference>
<dbReference type="InterPro" id="IPR041107">
    <property type="entry name" value="Rimk_N"/>
</dbReference>
<dbReference type="InterPro" id="IPR004666">
    <property type="entry name" value="Rp_bS6_RimK/Lys_biosynth_LsyX"/>
</dbReference>
<dbReference type="NCBIfam" id="NF007764">
    <property type="entry name" value="PRK10446.1"/>
    <property type="match status" value="1"/>
</dbReference>
<dbReference type="NCBIfam" id="TIGR00768">
    <property type="entry name" value="rimK_fam"/>
    <property type="match status" value="1"/>
</dbReference>
<dbReference type="PANTHER" id="PTHR21621:SF7">
    <property type="entry name" value="RIBOSOMAL PROTEIN BS6--L-GLUTAMATE LIGASE"/>
    <property type="match status" value="1"/>
</dbReference>
<dbReference type="PANTHER" id="PTHR21621">
    <property type="entry name" value="RIBOSOMAL PROTEIN S6 MODIFICATION PROTEIN"/>
    <property type="match status" value="1"/>
</dbReference>
<dbReference type="Pfam" id="PF08443">
    <property type="entry name" value="RimK"/>
    <property type="match status" value="1"/>
</dbReference>
<dbReference type="Pfam" id="PF18030">
    <property type="entry name" value="Rimk_N"/>
    <property type="match status" value="1"/>
</dbReference>
<dbReference type="SUPFAM" id="SSF56059">
    <property type="entry name" value="Glutathione synthetase ATP-binding domain-like"/>
    <property type="match status" value="1"/>
</dbReference>
<dbReference type="PROSITE" id="PS50975">
    <property type="entry name" value="ATP_GRASP"/>
    <property type="match status" value="1"/>
</dbReference>
<keyword id="KW-0067">ATP-binding</keyword>
<keyword id="KW-0436">Ligase</keyword>
<keyword id="KW-0460">Magnesium</keyword>
<keyword id="KW-0464">Manganese</keyword>
<keyword id="KW-0479">Metal-binding</keyword>
<keyword id="KW-0547">Nucleotide-binding</keyword>
<keyword id="KW-0648">Protein biosynthesis</keyword>